<evidence type="ECO:0000269" key="1">
    <source>
    </source>
</evidence>
<evidence type="ECO:0000303" key="2">
    <source>
    </source>
</evidence>
<evidence type="ECO:0000303" key="3">
    <source>
    </source>
</evidence>
<evidence type="ECO:0000305" key="4"/>
<evidence type="ECO:0000305" key="5">
    <source>
    </source>
</evidence>
<sequence length="183" mass="19559">MKVLIVALALLALAASAASSTSGGCGCQTPPFHLPPPFYMPPPFYLPPQQQPQPWQYPTQPPQLSPCQQFGSCGVGSVGSPFLGQCVEFLRHQCSPAATPYGSPQCQALQQQCCHQIRQVEPLHRYQATYGVVLQSFLQQQPQGELAALMAAQVAQQLTAMCGLQLQQPGPCPCNAAAGGVYY</sequence>
<name>ZEB2_MAIZE</name>
<accession>P08031</accession>
<proteinExistence type="evidence at protein level"/>
<organism>
    <name type="scientific">Zea mays</name>
    <name type="common">Maize</name>
    <dbReference type="NCBI Taxonomy" id="4577"/>
    <lineage>
        <taxon>Eukaryota</taxon>
        <taxon>Viridiplantae</taxon>
        <taxon>Streptophyta</taxon>
        <taxon>Embryophyta</taxon>
        <taxon>Tracheophyta</taxon>
        <taxon>Spermatophyta</taxon>
        <taxon>Magnoliopsida</taxon>
        <taxon>Liliopsida</taxon>
        <taxon>Poales</taxon>
        <taxon>Poaceae</taxon>
        <taxon>PACMAD clade</taxon>
        <taxon>Panicoideae</taxon>
        <taxon>Andropogonodae</taxon>
        <taxon>Andropogoneae</taxon>
        <taxon>Tripsacinae</taxon>
        <taxon>Zea</taxon>
    </lineage>
</organism>
<protein>
    <recommendedName>
        <fullName evidence="4">16 kDa gamma-zein</fullName>
    </recommendedName>
    <alternativeName>
        <fullName evidence="3">16 kDa zein</fullName>
    </alternativeName>
    <alternativeName>
        <fullName evidence="2">Zein Zc1</fullName>
    </alternativeName>
    <alternativeName>
        <fullName evidence="3">Zein-2</fullName>
    </alternativeName>
    <alternativeName>
        <fullName evidence="4">Zein-gamma</fullName>
    </alternativeName>
</protein>
<dbReference type="EMBL" id="M16460">
    <property type="protein sequence ID" value="AAA33523.1"/>
    <property type="molecule type" value="mRNA"/>
</dbReference>
<dbReference type="EMBL" id="X53515">
    <property type="protein sequence ID" value="CAA37595.1"/>
    <property type="molecule type" value="Genomic_DNA"/>
</dbReference>
<dbReference type="PIR" id="B29017">
    <property type="entry name" value="B29017"/>
</dbReference>
<dbReference type="RefSeq" id="NP_001105337.1">
    <property type="nucleotide sequence ID" value="NM_001111867.2"/>
</dbReference>
<dbReference type="SMR" id="P08031"/>
<dbReference type="FunCoup" id="P08031">
    <property type="interactions" value="3"/>
</dbReference>
<dbReference type="STRING" id="4577.P08031"/>
<dbReference type="PaxDb" id="4577-GRMZM2G060429_P01"/>
<dbReference type="GeneID" id="542262"/>
<dbReference type="KEGG" id="zma:542262"/>
<dbReference type="MaizeGDB" id="58053"/>
<dbReference type="eggNOG" id="ENOG502R4K8">
    <property type="taxonomic scope" value="Eukaryota"/>
</dbReference>
<dbReference type="HOGENOM" id="CLU_1477240_0_0_1"/>
<dbReference type="InParanoid" id="P08031"/>
<dbReference type="OrthoDB" id="693584at2759"/>
<dbReference type="Proteomes" id="UP000007305">
    <property type="component" value="Unplaced"/>
</dbReference>
<dbReference type="GO" id="GO:0033095">
    <property type="term" value="C:aleurone grain"/>
    <property type="evidence" value="ECO:0007669"/>
    <property type="project" value="UniProtKB-SubCell"/>
</dbReference>
<dbReference type="GO" id="GO:0005773">
    <property type="term" value="C:vacuole"/>
    <property type="evidence" value="ECO:0007669"/>
    <property type="project" value="UniProtKB-KW"/>
</dbReference>
<dbReference type="GO" id="GO:0045735">
    <property type="term" value="F:nutrient reservoir activity"/>
    <property type="evidence" value="ECO:0007669"/>
    <property type="project" value="UniProtKB-KW"/>
</dbReference>
<dbReference type="Gene3D" id="1.10.110.10">
    <property type="entry name" value="Plant lipid-transfer and hydrophobic proteins"/>
    <property type="match status" value="1"/>
</dbReference>
<dbReference type="InterPro" id="IPR036312">
    <property type="entry name" value="Bifun_inhib/LTP/seed_sf"/>
</dbReference>
<dbReference type="InterPro" id="IPR016140">
    <property type="entry name" value="Bifunc_inhib/LTP/seed_store"/>
</dbReference>
<dbReference type="InterPro" id="IPR001954">
    <property type="entry name" value="Glia_glutenin"/>
</dbReference>
<dbReference type="InterPro" id="IPR000480">
    <property type="entry name" value="Glutelin"/>
</dbReference>
<dbReference type="PANTHER" id="PTHR33454:SF17">
    <property type="entry name" value="GLUTELIN-2"/>
    <property type="match status" value="1"/>
</dbReference>
<dbReference type="PANTHER" id="PTHR33454">
    <property type="entry name" value="PROLAMIN PPROL 14P"/>
    <property type="match status" value="1"/>
</dbReference>
<dbReference type="Pfam" id="PF13016">
    <property type="entry name" value="Gliadin"/>
    <property type="match status" value="1"/>
</dbReference>
<dbReference type="PRINTS" id="PR00211">
    <property type="entry name" value="GLUTELIN"/>
</dbReference>
<dbReference type="SUPFAM" id="SSF47699">
    <property type="entry name" value="Bifunctional inhibitor/lipid-transfer protein/seed storage 2S albumin"/>
    <property type="match status" value="1"/>
</dbReference>
<keyword id="KW-1185">Reference proteome</keyword>
<keyword id="KW-0677">Repeat</keyword>
<keyword id="KW-0708">Seed storage protein</keyword>
<keyword id="KW-0732">Signal</keyword>
<keyword id="KW-0758">Storage protein</keyword>
<keyword id="KW-0926">Vacuole</keyword>
<feature type="signal peptide">
    <location>
        <begin position="1"/>
        <end position="19"/>
    </location>
</feature>
<feature type="chain" id="PRO_0000022719" description="16 kDa gamma-zein">
    <location>
        <begin position="20"/>
        <end position="183"/>
    </location>
</feature>
<comment type="function">
    <text evidence="5">Zeins are major seed storage proteins.</text>
</comment>
<comment type="subunit">
    <text evidence="1">Interacts with OP10 (via N-terminus).</text>
</comment>
<comment type="subcellular location">
    <subcellularLocation>
        <location>Vacuole</location>
        <location>Aleurone grain</location>
    </subcellularLocation>
    <text evidence="5">Endosperm protein bodies.</text>
</comment>
<reference key="1">
    <citation type="journal article" date="1987" name="Gene">
        <title>Multiple variability in the sequence of a family of maize endosperm proteins.</title>
        <authorList>
            <person name="Prat S."/>
            <person name="Perez-Grau L."/>
            <person name="Puigdomenech P."/>
        </authorList>
    </citation>
    <scope>NUCLEOTIDE SEQUENCE [MRNA]</scope>
</reference>
<reference key="2">
    <citation type="journal article" date="1990" name="Nucleic Acids Res.">
        <title>DNA sequence of the gene encoding the Zc1 protein from Zea mays W64 A.</title>
        <authorList>
            <person name="Reina M."/>
            <person name="Guillen P."/>
            <person name="Ponte I."/>
            <person name="Boronat A."/>
            <person name="Palau J."/>
        </authorList>
    </citation>
    <scope>NUCLEOTIDE SEQUENCE [GENOMIC DNA]</scope>
    <source>
        <strain>cv. Wisconsin 64A</strain>
        <tissue>Endosperm</tissue>
    </source>
</reference>
<reference key="3">
    <citation type="journal article" date="2016" name="PLoS Genet.">
        <title>Maize opaque10 encodes a cereal-specific protein that is essential for the proper distribution of zeins in endosperm protein bodies.</title>
        <authorList>
            <person name="Yao D."/>
            <person name="Qi W."/>
            <person name="Li X."/>
            <person name="Yang Q."/>
            <person name="Yan S."/>
            <person name="Ling H."/>
            <person name="Wang G."/>
            <person name="Wang G."/>
            <person name="Song R."/>
        </authorList>
    </citation>
    <scope>INTERACTION WITH OP10</scope>
</reference>